<proteinExistence type="inferred from homology"/>
<evidence type="ECO:0000255" key="1">
    <source>
        <dbReference type="HAMAP-Rule" id="MF_00539"/>
    </source>
</evidence>
<evidence type="ECO:0000256" key="2">
    <source>
        <dbReference type="SAM" id="MobiDB-lite"/>
    </source>
</evidence>
<evidence type="ECO:0000305" key="3"/>
<accession>B4T716</accession>
<dbReference type="EMBL" id="CP001113">
    <property type="protein sequence ID" value="ACF62725.1"/>
    <property type="molecule type" value="Genomic_DNA"/>
</dbReference>
<dbReference type="RefSeq" id="WP_000940593.1">
    <property type="nucleotide sequence ID" value="NZ_CCMR01000001.1"/>
</dbReference>
<dbReference type="SMR" id="B4T716"/>
<dbReference type="GeneID" id="66757642"/>
<dbReference type="KEGG" id="see:SNSL254_A3564"/>
<dbReference type="HOGENOM" id="CLU_095424_4_1_6"/>
<dbReference type="Proteomes" id="UP000008824">
    <property type="component" value="Chromosome"/>
</dbReference>
<dbReference type="GO" id="GO:0022625">
    <property type="term" value="C:cytosolic large ribosomal subunit"/>
    <property type="evidence" value="ECO:0007669"/>
    <property type="project" value="TreeGrafter"/>
</dbReference>
<dbReference type="GO" id="GO:0003735">
    <property type="term" value="F:structural constituent of ribosome"/>
    <property type="evidence" value="ECO:0007669"/>
    <property type="project" value="InterPro"/>
</dbReference>
<dbReference type="GO" id="GO:0006412">
    <property type="term" value="P:translation"/>
    <property type="evidence" value="ECO:0007669"/>
    <property type="project" value="UniProtKB-UniRule"/>
</dbReference>
<dbReference type="FunFam" id="2.40.50.100:FF:000001">
    <property type="entry name" value="50S ribosomal protein L27"/>
    <property type="match status" value="1"/>
</dbReference>
<dbReference type="Gene3D" id="2.40.50.100">
    <property type="match status" value="1"/>
</dbReference>
<dbReference type="HAMAP" id="MF_00539">
    <property type="entry name" value="Ribosomal_bL27"/>
    <property type="match status" value="1"/>
</dbReference>
<dbReference type="InterPro" id="IPR001684">
    <property type="entry name" value="Ribosomal_bL27"/>
</dbReference>
<dbReference type="InterPro" id="IPR018261">
    <property type="entry name" value="Ribosomal_bL27_CS"/>
</dbReference>
<dbReference type="NCBIfam" id="TIGR00062">
    <property type="entry name" value="L27"/>
    <property type="match status" value="1"/>
</dbReference>
<dbReference type="PANTHER" id="PTHR15893:SF0">
    <property type="entry name" value="LARGE RIBOSOMAL SUBUNIT PROTEIN BL27M"/>
    <property type="match status" value="1"/>
</dbReference>
<dbReference type="PANTHER" id="PTHR15893">
    <property type="entry name" value="RIBOSOMAL PROTEIN L27"/>
    <property type="match status" value="1"/>
</dbReference>
<dbReference type="Pfam" id="PF01016">
    <property type="entry name" value="Ribosomal_L27"/>
    <property type="match status" value="1"/>
</dbReference>
<dbReference type="PRINTS" id="PR00063">
    <property type="entry name" value="RIBOSOMALL27"/>
</dbReference>
<dbReference type="SUPFAM" id="SSF110324">
    <property type="entry name" value="Ribosomal L27 protein-like"/>
    <property type="match status" value="1"/>
</dbReference>
<dbReference type="PROSITE" id="PS00831">
    <property type="entry name" value="RIBOSOMAL_L27"/>
    <property type="match status" value="1"/>
</dbReference>
<gene>
    <name evidence="1" type="primary">rpmA</name>
    <name type="ordered locus">SNSL254_A3564</name>
</gene>
<name>RL27_SALNS</name>
<sequence length="85" mass="9125">MAHKKAGGSTRNGRDSEAKRLGVKRFGGEAVLAGSIIVRQRGTKFHAGTNVGCGRDHTLFAKADGKVKFEVKGPKNRKYISIVAE</sequence>
<keyword id="KW-0687">Ribonucleoprotein</keyword>
<keyword id="KW-0689">Ribosomal protein</keyword>
<reference key="1">
    <citation type="journal article" date="2011" name="J. Bacteriol.">
        <title>Comparative genomics of 28 Salmonella enterica isolates: evidence for CRISPR-mediated adaptive sublineage evolution.</title>
        <authorList>
            <person name="Fricke W.F."/>
            <person name="Mammel M.K."/>
            <person name="McDermott P.F."/>
            <person name="Tartera C."/>
            <person name="White D.G."/>
            <person name="Leclerc J.E."/>
            <person name="Ravel J."/>
            <person name="Cebula T.A."/>
        </authorList>
    </citation>
    <scope>NUCLEOTIDE SEQUENCE [LARGE SCALE GENOMIC DNA]</scope>
    <source>
        <strain>SL254</strain>
    </source>
</reference>
<organism>
    <name type="scientific">Salmonella newport (strain SL254)</name>
    <dbReference type="NCBI Taxonomy" id="423368"/>
    <lineage>
        <taxon>Bacteria</taxon>
        <taxon>Pseudomonadati</taxon>
        <taxon>Pseudomonadota</taxon>
        <taxon>Gammaproteobacteria</taxon>
        <taxon>Enterobacterales</taxon>
        <taxon>Enterobacteriaceae</taxon>
        <taxon>Salmonella</taxon>
    </lineage>
</organism>
<protein>
    <recommendedName>
        <fullName evidence="1">Large ribosomal subunit protein bL27</fullName>
    </recommendedName>
    <alternativeName>
        <fullName evidence="3">50S ribosomal protein L27</fullName>
    </alternativeName>
</protein>
<comment type="similarity">
    <text evidence="1">Belongs to the bacterial ribosomal protein bL27 family.</text>
</comment>
<feature type="chain" id="PRO_1000128805" description="Large ribosomal subunit protein bL27">
    <location>
        <begin position="1"/>
        <end position="85"/>
    </location>
</feature>
<feature type="region of interest" description="Disordered" evidence="2">
    <location>
        <begin position="1"/>
        <end position="20"/>
    </location>
</feature>